<organism>
    <name type="scientific">Sus scrofa</name>
    <name type="common">Pig</name>
    <dbReference type="NCBI Taxonomy" id="9823"/>
    <lineage>
        <taxon>Eukaryota</taxon>
        <taxon>Metazoa</taxon>
        <taxon>Chordata</taxon>
        <taxon>Craniata</taxon>
        <taxon>Vertebrata</taxon>
        <taxon>Euteleostomi</taxon>
        <taxon>Mammalia</taxon>
        <taxon>Eutheria</taxon>
        <taxon>Laurasiatheria</taxon>
        <taxon>Artiodactyla</taxon>
        <taxon>Suina</taxon>
        <taxon>Suidae</taxon>
        <taxon>Sus</taxon>
    </lineage>
</organism>
<dbReference type="PIR" id="S17567">
    <property type="entry name" value="S17567"/>
</dbReference>
<dbReference type="PIR" id="S39434">
    <property type="entry name" value="S39434"/>
</dbReference>
<dbReference type="SMR" id="P24020"/>
<dbReference type="GlyGen" id="P24020">
    <property type="glycosylation" value="1 site"/>
</dbReference>
<dbReference type="InParanoid" id="P24020"/>
<dbReference type="Proteomes" id="UP000008227">
    <property type="component" value="Unplaced"/>
</dbReference>
<dbReference type="Proteomes" id="UP000314985">
    <property type="component" value="Unplaced"/>
</dbReference>
<dbReference type="Proteomes" id="UP000694570">
    <property type="component" value="Unplaced"/>
</dbReference>
<dbReference type="Proteomes" id="UP000694571">
    <property type="component" value="Unplaced"/>
</dbReference>
<dbReference type="Proteomes" id="UP000694720">
    <property type="component" value="Unplaced"/>
</dbReference>
<dbReference type="Proteomes" id="UP000694722">
    <property type="component" value="Unplaced"/>
</dbReference>
<dbReference type="Proteomes" id="UP000694723">
    <property type="component" value="Unplaced"/>
</dbReference>
<dbReference type="Proteomes" id="UP000694724">
    <property type="component" value="Unplaced"/>
</dbReference>
<dbReference type="Proteomes" id="UP000694725">
    <property type="component" value="Unplaced"/>
</dbReference>
<dbReference type="Proteomes" id="UP000694726">
    <property type="component" value="Unplaced"/>
</dbReference>
<dbReference type="Proteomes" id="UP000694727">
    <property type="component" value="Unplaced"/>
</dbReference>
<dbReference type="Proteomes" id="UP000694728">
    <property type="component" value="Unplaced"/>
</dbReference>
<dbReference type="GO" id="GO:0005576">
    <property type="term" value="C:extracellular region"/>
    <property type="evidence" value="ECO:0007669"/>
    <property type="project" value="UniProtKB-SubCell"/>
</dbReference>
<dbReference type="GO" id="GO:0008201">
    <property type="term" value="F:heparin binding"/>
    <property type="evidence" value="ECO:0007669"/>
    <property type="project" value="UniProtKB-KW"/>
</dbReference>
<dbReference type="GO" id="GO:0007338">
    <property type="term" value="P:single fertilization"/>
    <property type="evidence" value="ECO:0007669"/>
    <property type="project" value="UniProtKB-KW"/>
</dbReference>
<dbReference type="CDD" id="cd00041">
    <property type="entry name" value="CUB"/>
    <property type="match status" value="1"/>
</dbReference>
<dbReference type="Gene3D" id="2.60.120.290">
    <property type="entry name" value="Spermadhesin, CUB domain"/>
    <property type="match status" value="1"/>
</dbReference>
<dbReference type="InterPro" id="IPR000859">
    <property type="entry name" value="CUB_dom"/>
</dbReference>
<dbReference type="InterPro" id="IPR035914">
    <property type="entry name" value="Sperma_CUB_dom_sf"/>
</dbReference>
<dbReference type="InterPro" id="IPR000124">
    <property type="entry name" value="Spermadhesin"/>
</dbReference>
<dbReference type="Pfam" id="PF00431">
    <property type="entry name" value="CUB"/>
    <property type="match status" value="1"/>
</dbReference>
<dbReference type="SMART" id="SM00042">
    <property type="entry name" value="CUB"/>
    <property type="match status" value="1"/>
</dbReference>
<dbReference type="SUPFAM" id="SSF49854">
    <property type="entry name" value="Spermadhesin, CUB domain"/>
    <property type="match status" value="1"/>
</dbReference>
<dbReference type="PROSITE" id="PS01180">
    <property type="entry name" value="CUB"/>
    <property type="match status" value="1"/>
</dbReference>
<dbReference type="PROSITE" id="PS00985">
    <property type="entry name" value="SPERMADHESIN_1"/>
    <property type="match status" value="1"/>
</dbReference>
<dbReference type="PROSITE" id="PS00986">
    <property type="entry name" value="SPERMADHESIN_2"/>
    <property type="match status" value="1"/>
</dbReference>
<proteinExistence type="evidence at protein level"/>
<feature type="chain" id="PRO_0000221454" description="Carbohydrate-binding protein AQN-3">
    <location>
        <begin position="1"/>
        <end position="116"/>
    </location>
</feature>
<feature type="domain" description="CUB" evidence="1">
    <location>
        <begin position="9"/>
        <end position="110"/>
    </location>
</feature>
<feature type="modified residue" description="Methylhistidine" evidence="4">
    <location>
        <position position="85"/>
    </location>
</feature>
<feature type="glycosylation site" description="N-linked (GlcNAc...) asparagine">
    <location>
        <position position="50"/>
    </location>
</feature>
<feature type="disulfide bond" evidence="1 2">
    <location>
        <begin position="9"/>
        <end position="30"/>
    </location>
</feature>
<feature type="disulfide bond" evidence="1 2">
    <location>
        <begin position="53"/>
        <end position="74"/>
    </location>
</feature>
<feature type="sequence conflict" description="In Ref. 3; AA sequence." evidence="3" ref="3">
    <original>F</original>
    <variation>T</variation>
    <location>
        <position position="79"/>
    </location>
</feature>
<feature type="sequence conflict" description="In Ref. 2; AA sequence." evidence="3" ref="2">
    <original>H</original>
    <variation>S</variation>
    <location>
        <position position="85"/>
    </location>
</feature>
<sequence length="116" mass="12885">AQNKGSDDCGGFLKNYSGWISYYKALTTNCVWTIEMKPGHKIILQILPLNLTCGKEYLEVRDQRAGPDNFLKVCGGTGFVYQSSHNVATVKYSRDSHHPASSFNVYFYGIPQGAKA</sequence>
<comment type="function">
    <text>AQN proteins mediate the binding of boar spermatozoa to component(s) of the egg's zona pellucida by a carbohydrate-binding mechanism. AQN proteins are secretory components of the male accessory glands being coated to the sperm surface at the time of ejaculation. They possess as well heparin-, serine-protease-inhibitor-binding capability.</text>
</comment>
<comment type="subcellular location">
    <subcellularLocation>
        <location>Secreted</location>
    </subcellularLocation>
</comment>
<comment type="PTM">
    <text>The residue at position 85 was identified as a methylhistidine by mass spectrometry.</text>
</comment>
<comment type="similarity">
    <text evidence="3">Belongs to the spermadhesin family.</text>
</comment>
<reference key="1">
    <citation type="journal article" date="1991" name="FEBS Lett.">
        <title>The amino acid sequence of AQN-3, a carbohydrate-binding protein isolated from boar sperm. Location of disulphide bridges.</title>
        <authorList>
            <person name="Sanz L."/>
            <person name="Calvete J.J."/>
            <person name="Mann K."/>
            <person name="Schaefer W."/>
            <person name="Schmid E.R."/>
            <person name="Toepfer-Petersen E."/>
        </authorList>
    </citation>
    <scope>PROTEIN SEQUENCE</scope>
    <scope>DISULFIDE BONDS</scope>
    <scope>METHYLATION AT HIS-85</scope>
    <scope>IDENTIFICATION BY MASS SPECTROMETRY</scope>
    <source>
        <tissue>Sperm</tissue>
    </source>
</reference>
<reference key="2">
    <citation type="journal article" date="1993" name="Eur. J. Biochem.">
        <title>Characterization of two glycosylated boar spermadhesins.</title>
        <authorList>
            <person name="Calvete J.J."/>
            <person name="Solis D."/>
            <person name="Sanz L."/>
            <person name="Diaz-Maurino T."/>
            <person name="Schaefer W."/>
            <person name="Mann K."/>
            <person name="Toepfer-Petersen E."/>
        </authorList>
    </citation>
    <scope>PROTEIN SEQUENCE</scope>
    <source>
        <tissue>Sperm</tissue>
    </source>
</reference>
<reference key="3">
    <citation type="journal article" date="1996" name="FEBS Lett.">
        <title>Mapping the heparin-binding domain of boar spermadhesins.</title>
        <authorList>
            <person name="Calvete J.J."/>
            <person name="Dostalova Z."/>
            <person name="Sanz L."/>
            <person name="Adermann K."/>
            <person name="Thole H.H."/>
            <person name="Toepfer-Petersen E."/>
        </authorList>
    </citation>
    <scope>PROTEIN SEQUENCE OF 15-22 AND 79-84</scope>
</reference>
<keyword id="KW-0903">Direct protein sequencing</keyword>
<keyword id="KW-1015">Disulfide bond</keyword>
<keyword id="KW-0278">Fertilization</keyword>
<keyword id="KW-0325">Glycoprotein</keyword>
<keyword id="KW-0358">Heparin-binding</keyword>
<keyword id="KW-0488">Methylation</keyword>
<keyword id="KW-1185">Reference proteome</keyword>
<keyword id="KW-0964">Secreted</keyword>
<evidence type="ECO:0000255" key="1">
    <source>
        <dbReference type="PROSITE-ProRule" id="PRU00059"/>
    </source>
</evidence>
<evidence type="ECO:0000269" key="2">
    <source>
    </source>
</evidence>
<evidence type="ECO:0000305" key="3"/>
<evidence type="ECO:0000305" key="4">
    <source>
    </source>
</evidence>
<protein>
    <recommendedName>
        <fullName>Carbohydrate-binding protein AQN-3</fullName>
    </recommendedName>
    <alternativeName>
        <fullName>Spermadhesin AQN-3</fullName>
    </alternativeName>
    <alternativeName>
        <fullName>Zona pellucida-binding protein AQN-3</fullName>
    </alternativeName>
</protein>
<accession>P24020</accession>
<name>AQN3_PIG</name>